<comment type="function">
    <text evidence="2">Acts as an inhibitory modulator of PIEZO2 mechanosensitive channel in dorsal root ganglion (DRG) neurons through physical interactions or interference with the interaction between Piezo2 and the cytoskeleton.</text>
</comment>
<comment type="subunit">
    <text evidence="2">Interacts with PIEZO2; the interaction inhibits PIEZO2-conducted mechanically activated currents.</text>
</comment>
<comment type="subcellular location">
    <subcellularLocation>
        <location evidence="5">Membrane</location>
        <topology evidence="5">Multi-pass membrane protein</topology>
    </subcellularLocation>
</comment>
<comment type="similarity">
    <text evidence="5">Belongs to the TMC family.</text>
</comment>
<name>TMC7_MACFA</name>
<organism>
    <name type="scientific">Macaca fascicularis</name>
    <name type="common">Crab-eating macaque</name>
    <name type="synonym">Cynomolgus monkey</name>
    <dbReference type="NCBI Taxonomy" id="9541"/>
    <lineage>
        <taxon>Eukaryota</taxon>
        <taxon>Metazoa</taxon>
        <taxon>Chordata</taxon>
        <taxon>Craniata</taxon>
        <taxon>Vertebrata</taxon>
        <taxon>Euteleostomi</taxon>
        <taxon>Mammalia</taxon>
        <taxon>Eutheria</taxon>
        <taxon>Euarchontoglires</taxon>
        <taxon>Primates</taxon>
        <taxon>Haplorrhini</taxon>
        <taxon>Catarrhini</taxon>
        <taxon>Cercopithecidae</taxon>
        <taxon>Cercopithecinae</taxon>
        <taxon>Macaca</taxon>
    </lineage>
</organism>
<reference key="1">
    <citation type="submission" date="2005-06" db="EMBL/GenBank/DDBJ databases">
        <title>DNA sequences of macaque genes expressed in brain or testis and its evolutionary implications.</title>
        <authorList>
            <consortium name="International consortium for macaque cDNA sequencing and analysis"/>
        </authorList>
    </citation>
    <scope>NUCLEOTIDE SEQUENCE [LARGE SCALE MRNA]</scope>
    <source>
        <tissue>Testis</tissue>
    </source>
</reference>
<protein>
    <recommendedName>
        <fullName>Transmembrane channel-like protein 7</fullName>
    </recommendedName>
</protein>
<gene>
    <name type="primary">TMC7</name>
    <name type="ORF">QtsA-14390</name>
</gene>
<dbReference type="EMBL" id="AB168722">
    <property type="protein sequence ID" value="BAE00832.1"/>
    <property type="molecule type" value="mRNA"/>
</dbReference>
<dbReference type="RefSeq" id="NP_001272300.1">
    <property type="nucleotide sequence ID" value="NM_001285371.1"/>
</dbReference>
<dbReference type="RefSeq" id="XP_045238834.2">
    <property type="nucleotide sequence ID" value="XM_045382899.2"/>
</dbReference>
<dbReference type="SMR" id="Q4R7U0"/>
<dbReference type="STRING" id="9541.ENSMFAP00000028585"/>
<dbReference type="GlyCosmos" id="Q4R7U0">
    <property type="glycosylation" value="5 sites, No reported glycans"/>
</dbReference>
<dbReference type="GeneID" id="101865212"/>
<dbReference type="VEuPathDB" id="HostDB:ENSMFAG00000045638"/>
<dbReference type="eggNOG" id="ENOG502QPM8">
    <property type="taxonomic scope" value="Eukaryota"/>
</dbReference>
<dbReference type="Proteomes" id="UP000233100">
    <property type="component" value="Chromosome 20"/>
</dbReference>
<dbReference type="GO" id="GO:0005886">
    <property type="term" value="C:plasma membrane"/>
    <property type="evidence" value="ECO:0007669"/>
    <property type="project" value="InterPro"/>
</dbReference>
<dbReference type="GO" id="GO:0008200">
    <property type="term" value="F:ion channel inhibitor activity"/>
    <property type="evidence" value="ECO:0000250"/>
    <property type="project" value="UniProtKB"/>
</dbReference>
<dbReference type="GO" id="GO:0008381">
    <property type="term" value="F:mechanosensitive monoatomic ion channel activity"/>
    <property type="evidence" value="ECO:0007669"/>
    <property type="project" value="TreeGrafter"/>
</dbReference>
<dbReference type="GO" id="GO:0050954">
    <property type="term" value="P:sensory perception of mechanical stimulus"/>
    <property type="evidence" value="ECO:0000250"/>
    <property type="project" value="UniProtKB"/>
</dbReference>
<dbReference type="InterPro" id="IPR038900">
    <property type="entry name" value="TMC"/>
</dbReference>
<dbReference type="InterPro" id="IPR012496">
    <property type="entry name" value="TMC_dom"/>
</dbReference>
<dbReference type="PANTHER" id="PTHR23302:SF42">
    <property type="entry name" value="TRANSMEMBRANE CHANNEL-LIKE PROTEIN 7"/>
    <property type="match status" value="1"/>
</dbReference>
<dbReference type="PANTHER" id="PTHR23302">
    <property type="entry name" value="TRANSMEMBRANE CHANNEL-RELATED"/>
    <property type="match status" value="1"/>
</dbReference>
<dbReference type="Pfam" id="PF07810">
    <property type="entry name" value="TMC"/>
    <property type="match status" value="1"/>
</dbReference>
<evidence type="ECO:0000250" key="1">
    <source>
        <dbReference type="UniProtKB" id="Q7Z402"/>
    </source>
</evidence>
<evidence type="ECO:0000250" key="2">
    <source>
        <dbReference type="UniProtKB" id="Q8C428"/>
    </source>
</evidence>
<evidence type="ECO:0000255" key="3"/>
<evidence type="ECO:0000256" key="4">
    <source>
        <dbReference type="SAM" id="MobiDB-lite"/>
    </source>
</evidence>
<evidence type="ECO:0000305" key="5"/>
<accession>Q4R7U0</accession>
<feature type="chain" id="PRO_0000287166" description="Transmembrane channel-like protein 7">
    <location>
        <begin position="1"/>
        <end position="723"/>
    </location>
</feature>
<feature type="topological domain" description="Extracellular" evidence="3">
    <location>
        <begin position="1"/>
        <end position="168"/>
    </location>
</feature>
<feature type="transmembrane region" description="Helical" evidence="3">
    <location>
        <begin position="169"/>
        <end position="189"/>
    </location>
</feature>
<feature type="topological domain" description="Cytoplasmic" evidence="3">
    <location>
        <begin position="190"/>
        <end position="219"/>
    </location>
</feature>
<feature type="transmembrane region" description="Helical" evidence="3">
    <location>
        <begin position="220"/>
        <end position="240"/>
    </location>
</feature>
<feature type="topological domain" description="Extracellular" evidence="3">
    <location>
        <begin position="241"/>
        <end position="263"/>
    </location>
</feature>
<feature type="transmembrane region" description="Helical" evidence="3">
    <location>
        <begin position="264"/>
        <end position="284"/>
    </location>
</feature>
<feature type="topological domain" description="Cytoplasmic" evidence="3">
    <location>
        <begin position="285"/>
        <end position="362"/>
    </location>
</feature>
<feature type="transmembrane region" description="Helical" evidence="3">
    <location>
        <begin position="363"/>
        <end position="383"/>
    </location>
</feature>
<feature type="topological domain" description="Extracellular" evidence="3">
    <location>
        <begin position="384"/>
        <end position="404"/>
    </location>
</feature>
<feature type="transmembrane region" description="Helical" evidence="3">
    <location>
        <begin position="405"/>
        <end position="425"/>
    </location>
</feature>
<feature type="topological domain" description="Cytoplasmic" evidence="3">
    <location>
        <begin position="426"/>
        <end position="494"/>
    </location>
</feature>
<feature type="transmembrane region" description="Helical" evidence="3">
    <location>
        <begin position="495"/>
        <end position="515"/>
    </location>
</feature>
<feature type="topological domain" description="Extracellular" evidence="3">
    <location>
        <begin position="516"/>
        <end position="555"/>
    </location>
</feature>
<feature type="transmembrane region" description="Helical" evidence="3">
    <location>
        <begin position="556"/>
        <end position="576"/>
    </location>
</feature>
<feature type="topological domain" description="Cytoplasmic" evidence="3">
    <location>
        <begin position="577"/>
        <end position="601"/>
    </location>
</feature>
<feature type="transmembrane region" description="Helical" evidence="3">
    <location>
        <begin position="602"/>
        <end position="622"/>
    </location>
</feature>
<feature type="topological domain" description="Extracellular" evidence="3">
    <location>
        <begin position="623"/>
        <end position="665"/>
    </location>
</feature>
<feature type="transmembrane region" description="Helical" evidence="3">
    <location>
        <begin position="666"/>
        <end position="686"/>
    </location>
</feature>
<feature type="topological domain" description="Cytoplasmic" evidence="3">
    <location>
        <begin position="687"/>
        <end position="723"/>
    </location>
</feature>
<feature type="region of interest" description="Disordered" evidence="4">
    <location>
        <begin position="1"/>
        <end position="21"/>
    </location>
</feature>
<feature type="region of interest" description="Disordered" evidence="4">
    <location>
        <begin position="51"/>
        <end position="70"/>
    </location>
</feature>
<feature type="modified residue" description="Phosphoserine" evidence="1">
    <location>
        <position position="89"/>
    </location>
</feature>
<feature type="glycosylation site" description="N-linked (GlcNAc...) asparagine" evidence="3">
    <location>
        <position position="24"/>
    </location>
</feature>
<feature type="glycosylation site" description="N-linked (GlcNAc...) asparagine" evidence="3">
    <location>
        <position position="84"/>
    </location>
</feature>
<feature type="glycosylation site" description="N-linked (GlcNAc...) asparagine" evidence="3">
    <location>
        <position position="96"/>
    </location>
</feature>
<feature type="glycosylation site" description="N-linked (GlcNAc...) asparagine" evidence="3">
    <location>
        <position position="259"/>
    </location>
</feature>
<feature type="glycosylation site" description="N-linked (GlcNAc...) asparagine" evidence="3">
    <location>
        <position position="638"/>
    </location>
</feature>
<keyword id="KW-0325">Glycoprotein</keyword>
<keyword id="KW-0472">Membrane</keyword>
<keyword id="KW-0597">Phosphoprotein</keyword>
<keyword id="KW-1185">Reference proteome</keyword>
<keyword id="KW-0812">Transmembrane</keyword>
<keyword id="KW-1133">Transmembrane helix</keyword>
<sequence length="723" mass="83596">MSESSASALQLGRPSRQPAVHPENLSLDASCFSSPPVNFLQELPSYRSIARRRTTVHSRDKQSGTLLKSTDSYSSQLEDRIAENLSSQSLRNYALNISEKRRLRDIQETQMKYLSEWDQWKRYSSKSWKRFLEKAREMTTHLELWREDIRSIEGKFGTGIQSYFSFLRFLVLLNLVIFLIIFMLVLLPILLTKYKITNSSFVLIPFKDTDIQCTVYPVSSSGLIYFYSYIIDLLSGTGFLEETSLFYGHYTIDGVKFQNFTYDLPLAYLISTIAYLALSLLWIVKRSVEGFKINLIRSEEHFQSYCNKIFAGWDFCITNRSMADLKHSSLRYELRADLEEERIRQKIAERTSEETIRIYSLRLFLNCIVLAVLGACFYAIYVATVFSQEHMKKEIDKMVFGENLLILYLPSIVITLANFITPMIFAKIIRYEDYSPGFEIRLTILRCVFMRLATICVLVFTLGSKITSCDDDTCDLCGYNQKLYPCWETQVGQEMYKLMIFDFIIILAVTLFVDFPRKLLVTYCSSWKLIQCWGQQEFAIPDNVLGIVYGQTICWIGAFFSPLLPAIATLKFIIIFYVKEWSLLYTCRPSPRPFRASNSNFFFLLVLLIGLCLAIIPLTISISRIPSSKACGPFTNFNTTWEVIPKTVSTFPSSLQSFIHGVTSEAFAVPFFMIICLIMFYFIALAGAHKRVVIQLREQLSLESRDKRYLIQKLTEAQRDTRN</sequence>
<proteinExistence type="evidence at transcript level"/>